<comment type="function">
    <text evidence="1">DNA-dependent RNA polymerase catalyzes the transcription of DNA into RNA using the four ribonucleoside triphosphates as substrates.</text>
</comment>
<comment type="catalytic activity">
    <reaction evidence="1">
        <text>RNA(n) + a ribonucleoside 5'-triphosphate = RNA(n+1) + diphosphate</text>
        <dbReference type="Rhea" id="RHEA:21248"/>
        <dbReference type="Rhea" id="RHEA-COMP:14527"/>
        <dbReference type="Rhea" id="RHEA-COMP:17342"/>
        <dbReference type="ChEBI" id="CHEBI:33019"/>
        <dbReference type="ChEBI" id="CHEBI:61557"/>
        <dbReference type="ChEBI" id="CHEBI:140395"/>
        <dbReference type="EC" id="2.7.7.6"/>
    </reaction>
</comment>
<comment type="subunit">
    <text evidence="1">Homodimer. The RNAP catalytic core consists of 2 alpha, 1 beta, 1 beta' and 1 omega subunit. When a sigma factor is associated with the core the holoenzyme is formed, which can initiate transcription.</text>
</comment>
<comment type="domain">
    <text evidence="1">The N-terminal domain is essential for RNAP assembly and basal transcription, whereas the C-terminal domain is involved in interaction with transcriptional regulators and with upstream promoter elements.</text>
</comment>
<comment type="similarity">
    <text evidence="1">Belongs to the RNA polymerase alpha chain family.</text>
</comment>
<evidence type="ECO:0000255" key="1">
    <source>
        <dbReference type="HAMAP-Rule" id="MF_00059"/>
    </source>
</evidence>
<dbReference type="EC" id="2.7.7.6" evidence="1"/>
<dbReference type="EMBL" id="CP000439">
    <property type="protein sequence ID" value="ABK89173.1"/>
    <property type="molecule type" value="Genomic_DNA"/>
</dbReference>
<dbReference type="RefSeq" id="WP_003032894.1">
    <property type="nucleotide sequence ID" value="NC_008601.1"/>
</dbReference>
<dbReference type="SMR" id="A0Q4K8"/>
<dbReference type="KEGG" id="ftn:FTN_0264"/>
<dbReference type="KEGG" id="ftx:AW25_1778"/>
<dbReference type="BioCyc" id="FTUL401614:G1G75-275-MONOMER"/>
<dbReference type="Proteomes" id="UP000000762">
    <property type="component" value="Chromosome"/>
</dbReference>
<dbReference type="GO" id="GO:0005737">
    <property type="term" value="C:cytoplasm"/>
    <property type="evidence" value="ECO:0007669"/>
    <property type="project" value="UniProtKB-ARBA"/>
</dbReference>
<dbReference type="GO" id="GO:0000428">
    <property type="term" value="C:DNA-directed RNA polymerase complex"/>
    <property type="evidence" value="ECO:0007669"/>
    <property type="project" value="UniProtKB-KW"/>
</dbReference>
<dbReference type="GO" id="GO:0003677">
    <property type="term" value="F:DNA binding"/>
    <property type="evidence" value="ECO:0007669"/>
    <property type="project" value="UniProtKB-UniRule"/>
</dbReference>
<dbReference type="GO" id="GO:0003899">
    <property type="term" value="F:DNA-directed RNA polymerase activity"/>
    <property type="evidence" value="ECO:0007669"/>
    <property type="project" value="UniProtKB-UniRule"/>
</dbReference>
<dbReference type="GO" id="GO:0046983">
    <property type="term" value="F:protein dimerization activity"/>
    <property type="evidence" value="ECO:0007669"/>
    <property type="project" value="InterPro"/>
</dbReference>
<dbReference type="GO" id="GO:0006351">
    <property type="term" value="P:DNA-templated transcription"/>
    <property type="evidence" value="ECO:0007669"/>
    <property type="project" value="UniProtKB-UniRule"/>
</dbReference>
<dbReference type="CDD" id="cd06928">
    <property type="entry name" value="RNAP_alpha_NTD"/>
    <property type="match status" value="1"/>
</dbReference>
<dbReference type="FunFam" id="1.10.150.20:FF:000001">
    <property type="entry name" value="DNA-directed RNA polymerase subunit alpha"/>
    <property type="match status" value="1"/>
</dbReference>
<dbReference type="Gene3D" id="1.10.150.20">
    <property type="entry name" value="5' to 3' exonuclease, C-terminal subdomain"/>
    <property type="match status" value="1"/>
</dbReference>
<dbReference type="Gene3D" id="2.170.120.12">
    <property type="entry name" value="DNA-directed RNA polymerase, insert domain"/>
    <property type="match status" value="1"/>
</dbReference>
<dbReference type="Gene3D" id="3.30.1360.10">
    <property type="entry name" value="RNA polymerase, RBP11-like subunit"/>
    <property type="match status" value="1"/>
</dbReference>
<dbReference type="HAMAP" id="MF_00059">
    <property type="entry name" value="RNApol_bact_RpoA"/>
    <property type="match status" value="1"/>
</dbReference>
<dbReference type="InterPro" id="IPR011262">
    <property type="entry name" value="DNA-dir_RNA_pol_insert"/>
</dbReference>
<dbReference type="InterPro" id="IPR011263">
    <property type="entry name" value="DNA-dir_RNA_pol_RpoA/D/Rpb3"/>
</dbReference>
<dbReference type="InterPro" id="IPR011773">
    <property type="entry name" value="DNA-dir_RpoA"/>
</dbReference>
<dbReference type="InterPro" id="IPR036603">
    <property type="entry name" value="RBP11-like"/>
</dbReference>
<dbReference type="InterPro" id="IPR011260">
    <property type="entry name" value="RNAP_asu_C"/>
</dbReference>
<dbReference type="InterPro" id="IPR036643">
    <property type="entry name" value="RNApol_insert_sf"/>
</dbReference>
<dbReference type="NCBIfam" id="NF003513">
    <property type="entry name" value="PRK05182.1-2"/>
    <property type="match status" value="1"/>
</dbReference>
<dbReference type="NCBIfam" id="TIGR02027">
    <property type="entry name" value="rpoA"/>
    <property type="match status" value="1"/>
</dbReference>
<dbReference type="Pfam" id="PF01000">
    <property type="entry name" value="RNA_pol_A_bac"/>
    <property type="match status" value="1"/>
</dbReference>
<dbReference type="Pfam" id="PF03118">
    <property type="entry name" value="RNA_pol_A_CTD"/>
    <property type="match status" value="1"/>
</dbReference>
<dbReference type="Pfam" id="PF01193">
    <property type="entry name" value="RNA_pol_L"/>
    <property type="match status" value="1"/>
</dbReference>
<dbReference type="SMART" id="SM00662">
    <property type="entry name" value="RPOLD"/>
    <property type="match status" value="1"/>
</dbReference>
<dbReference type="SUPFAM" id="SSF47789">
    <property type="entry name" value="C-terminal domain of RNA polymerase alpha subunit"/>
    <property type="match status" value="1"/>
</dbReference>
<dbReference type="SUPFAM" id="SSF56553">
    <property type="entry name" value="Insert subdomain of RNA polymerase alpha subunit"/>
    <property type="match status" value="1"/>
</dbReference>
<dbReference type="SUPFAM" id="SSF55257">
    <property type="entry name" value="RBP11-like subunits of RNA polymerase"/>
    <property type="match status" value="1"/>
</dbReference>
<proteinExistence type="inferred from homology"/>
<feature type="chain" id="PRO_0000296806" description="DNA-directed RNA polymerase subunit alpha 1">
    <location>
        <begin position="1"/>
        <end position="323"/>
    </location>
</feature>
<feature type="region of interest" description="Alpha N-terminal domain (alpha-NTD)" evidence="1">
    <location>
        <begin position="1"/>
        <end position="228"/>
    </location>
</feature>
<feature type="region of interest" description="Alpha C-terminal domain (alpha-CTD)" evidence="1">
    <location>
        <begin position="244"/>
        <end position="323"/>
    </location>
</feature>
<accession>A0Q4K8</accession>
<keyword id="KW-0240">DNA-directed RNA polymerase</keyword>
<keyword id="KW-0548">Nucleotidyltransferase</keyword>
<keyword id="KW-0804">Transcription</keyword>
<keyword id="KW-0808">Transferase</keyword>
<reference key="1">
    <citation type="journal article" date="2007" name="Genome Biol.">
        <title>Comparison of Francisella tularensis genomes reveals evolutionary events associated with the emergence of human pathogenic strains.</title>
        <authorList>
            <person name="Rohmer L."/>
            <person name="Fong C."/>
            <person name="Abmayr S."/>
            <person name="Wasnick M."/>
            <person name="Larson Freeman T.J."/>
            <person name="Radey M."/>
            <person name="Guina T."/>
            <person name="Svensson K."/>
            <person name="Hayden H.S."/>
            <person name="Jacobs M."/>
            <person name="Gallagher L.A."/>
            <person name="Manoil C."/>
            <person name="Ernst R.K."/>
            <person name="Drees B."/>
            <person name="Buckley D."/>
            <person name="Haugen E."/>
            <person name="Bovee D."/>
            <person name="Zhou Y."/>
            <person name="Chang J."/>
            <person name="Levy R."/>
            <person name="Lim R."/>
            <person name="Gillett W."/>
            <person name="Guenthener D."/>
            <person name="Kang A."/>
            <person name="Shaffer S.A."/>
            <person name="Taylor G."/>
            <person name="Chen J."/>
            <person name="Gallis B."/>
            <person name="D'Argenio D.A."/>
            <person name="Forsman M."/>
            <person name="Olson M.V."/>
            <person name="Goodlett D.R."/>
            <person name="Kaul R."/>
            <person name="Miller S.I."/>
            <person name="Brittnacher M.J."/>
        </authorList>
    </citation>
    <scope>NUCLEOTIDE SEQUENCE [LARGE SCALE GENOMIC DNA]</scope>
    <source>
        <strain>U112</strain>
    </source>
</reference>
<sequence length="323" mass="35387">MSNNNSKQEFVPNIQLKEDLGAFSYKVQLSPVEKGMAHILGNSIRRVLLSSLSGASIIKVNIANVLHEYSTLEDVKEDVVEIVSNLKKVAIKLDTAIDRLDLELSVNKSGVVSAGDFKTTQGVEIINKDQPIATLTNQRAFSLTATVSVGRNVGILSAIPTELERVGDIAVDADFNPIKRVAFEVFDNGDSETLEVFVKTNGTIEPLAAVTKALEYFCEQISVFVSLRVPSNGKTGDVLIDSNIDPILLKPIDDLELTVRSSNCLRAENIKYLGDLVQYSESQLMKIPNLGKKSLNEIKQILIDNNLSLGVQIDNFRELVEGK</sequence>
<name>RPOA1_FRATN</name>
<gene>
    <name evidence="1" type="primary">rpoA1</name>
    <name type="ordered locus">FTN_0264</name>
</gene>
<protein>
    <recommendedName>
        <fullName evidence="1">DNA-directed RNA polymerase subunit alpha 1</fullName>
        <shortName evidence="1">RNAP subunit alpha 1</shortName>
        <ecNumber evidence="1">2.7.7.6</ecNumber>
    </recommendedName>
    <alternativeName>
        <fullName evidence="1">RNA polymerase subunit alpha 1</fullName>
    </alternativeName>
    <alternativeName>
        <fullName evidence="1">Transcriptase subunit alpha 1</fullName>
    </alternativeName>
</protein>
<organism>
    <name type="scientific">Francisella tularensis subsp. novicida (strain U112)</name>
    <dbReference type="NCBI Taxonomy" id="401614"/>
    <lineage>
        <taxon>Bacteria</taxon>
        <taxon>Pseudomonadati</taxon>
        <taxon>Pseudomonadota</taxon>
        <taxon>Gammaproteobacteria</taxon>
        <taxon>Thiotrichales</taxon>
        <taxon>Francisellaceae</taxon>
        <taxon>Francisella</taxon>
    </lineage>
</organism>